<proteinExistence type="evidence at protein level"/>
<feature type="peptide" id="PRO_0000045088" description="Lantibiotic carnocin-UI49">
    <location>
        <begin position="1"/>
        <end position="7" status="greater than"/>
    </location>
</feature>
<feature type="non-terminal residue">
    <location>
        <position position="7"/>
    </location>
</feature>
<accession>P36960</accession>
<comment type="function">
    <text>Lanthionine-containing peptide antibiotic (lantibiotic). Active on Gram-positive bacteria.</text>
</comment>
<sequence>GSEIQPR</sequence>
<reference key="1">
    <citation type="journal article" date="1992" name="Appl. Environ. Microbiol.">
        <title>Purification and characterization of a new bacteriocin isolated from a Carnobacterium sp.</title>
        <authorList>
            <person name="Stoffels G."/>
            <person name="Nissen-Meyer J."/>
            <person name="Gudmundsdottir A."/>
            <person name="Sletten K."/>
            <person name="Holo H."/>
            <person name="Nes I.F."/>
        </authorList>
    </citation>
    <scope>PROTEIN SEQUENCE</scope>
</reference>
<dbReference type="GO" id="GO:0005102">
    <property type="term" value="F:signaling receptor binding"/>
    <property type="evidence" value="ECO:0007669"/>
    <property type="project" value="UniProtKB-KW"/>
</dbReference>
<dbReference type="GO" id="GO:0042742">
    <property type="term" value="P:defense response to bacterium"/>
    <property type="evidence" value="ECO:0007669"/>
    <property type="project" value="UniProtKB-KW"/>
</dbReference>
<dbReference type="GO" id="GO:0031640">
    <property type="term" value="P:killing of cells of another organism"/>
    <property type="evidence" value="ECO:0007669"/>
    <property type="project" value="UniProtKB-KW"/>
</dbReference>
<keyword id="KW-0044">Antibiotic</keyword>
<keyword id="KW-0929">Antimicrobial</keyword>
<keyword id="KW-0078">Bacteriocin</keyword>
<keyword id="KW-0903">Direct protein sequencing</keyword>
<keyword id="KW-0425">Lantibiotic</keyword>
<protein>
    <recommendedName>
        <fullName>Lantibiotic carnocin-UI49</fullName>
    </recommendedName>
</protein>
<name>LANC_CARUI</name>
<organism>
    <name type="scientific">Carnobacterium sp. (strain UI49)</name>
    <dbReference type="NCBI Taxonomy" id="35782"/>
    <lineage>
        <taxon>Bacteria</taxon>
        <taxon>Bacillati</taxon>
        <taxon>Bacillota</taxon>
        <taxon>Bacilli</taxon>
        <taxon>Lactobacillales</taxon>
        <taxon>Carnobacteriaceae</taxon>
        <taxon>Carnobacterium</taxon>
    </lineage>
</organism>